<proteinExistence type="inferred from homology"/>
<reference key="1">
    <citation type="journal article" date="2010" name="Proc. Natl. Acad. Sci. U.S.A.">
        <title>Nitrosopumilus maritimus genome reveals unique mechanisms for nitrification and autotrophy in globally distributed marine crenarchaea.</title>
        <authorList>
            <person name="Walker C.B."/>
            <person name="de la Torre J.R."/>
            <person name="Klotz M.G."/>
            <person name="Urakawa H."/>
            <person name="Pinel N."/>
            <person name="Arp D.J."/>
            <person name="Brochier-Armanet C."/>
            <person name="Chain P.S."/>
            <person name="Chan P.P."/>
            <person name="Gollabgir A."/>
            <person name="Hemp J."/>
            <person name="Hugler M."/>
            <person name="Karr E.A."/>
            <person name="Konneke M."/>
            <person name="Shin M."/>
            <person name="Lawton T.J."/>
            <person name="Lowe T."/>
            <person name="Martens-Habbena W."/>
            <person name="Sayavedra-Soto L.A."/>
            <person name="Lang D."/>
            <person name="Sievert S.M."/>
            <person name="Rosenzweig A.C."/>
            <person name="Manning G."/>
            <person name="Stahl D.A."/>
        </authorList>
    </citation>
    <scope>NUCLEOTIDE SEQUENCE [LARGE SCALE GENOMIC DNA]</scope>
    <source>
        <strain>SCM1</strain>
    </source>
</reference>
<organism>
    <name type="scientific">Nitrosopumilus maritimus (strain SCM1)</name>
    <dbReference type="NCBI Taxonomy" id="436308"/>
    <lineage>
        <taxon>Archaea</taxon>
        <taxon>Nitrososphaerota</taxon>
        <taxon>Nitrososphaeria</taxon>
        <taxon>Nitrosopumilales</taxon>
        <taxon>Nitrosopumilaceae</taxon>
        <taxon>Nitrosopumilus</taxon>
    </lineage>
</organism>
<protein>
    <recommendedName>
        <fullName evidence="1">ADP-dependent (S)-NAD(P)H-hydrate dehydratase</fullName>
        <ecNumber evidence="1">4.2.1.136</ecNumber>
    </recommendedName>
    <alternativeName>
        <fullName evidence="1">ADP-dependent NAD(P)HX dehydratase</fullName>
    </alternativeName>
</protein>
<comment type="function">
    <text evidence="1">Catalyzes the dehydration of the S-form of NAD(P)HX at the expense of ADP, which is converted to AMP. Together with NAD(P)HX epimerase, which catalyzes the epimerization of the S- and R-forms, the enzyme allows the repair of both epimers of NAD(P)HX, a damaged form of NAD(P)H that is a result of enzymatic or heat-dependent hydration.</text>
</comment>
<comment type="catalytic activity">
    <reaction evidence="1">
        <text>(6S)-NADHX + ADP = AMP + phosphate + NADH + H(+)</text>
        <dbReference type="Rhea" id="RHEA:32223"/>
        <dbReference type="ChEBI" id="CHEBI:15378"/>
        <dbReference type="ChEBI" id="CHEBI:43474"/>
        <dbReference type="ChEBI" id="CHEBI:57945"/>
        <dbReference type="ChEBI" id="CHEBI:64074"/>
        <dbReference type="ChEBI" id="CHEBI:456215"/>
        <dbReference type="ChEBI" id="CHEBI:456216"/>
        <dbReference type="EC" id="4.2.1.136"/>
    </reaction>
</comment>
<comment type="catalytic activity">
    <reaction evidence="1">
        <text>(6S)-NADPHX + ADP = AMP + phosphate + NADPH + H(+)</text>
        <dbReference type="Rhea" id="RHEA:32235"/>
        <dbReference type="ChEBI" id="CHEBI:15378"/>
        <dbReference type="ChEBI" id="CHEBI:43474"/>
        <dbReference type="ChEBI" id="CHEBI:57783"/>
        <dbReference type="ChEBI" id="CHEBI:64076"/>
        <dbReference type="ChEBI" id="CHEBI:456215"/>
        <dbReference type="ChEBI" id="CHEBI:456216"/>
        <dbReference type="EC" id="4.2.1.136"/>
    </reaction>
</comment>
<comment type="cofactor">
    <cofactor evidence="1">
        <name>Mg(2+)</name>
        <dbReference type="ChEBI" id="CHEBI:18420"/>
    </cofactor>
</comment>
<comment type="subunit">
    <text evidence="1">Homotetramer.</text>
</comment>
<comment type="similarity">
    <text evidence="1">Belongs to the NnrD/CARKD family.</text>
</comment>
<feature type="chain" id="PRO_0000416155" description="ADP-dependent (S)-NAD(P)H-hydrate dehydratase">
    <location>
        <begin position="1"/>
        <end position="287"/>
    </location>
</feature>
<feature type="domain" description="YjeF C-terminal" evidence="1">
    <location>
        <begin position="7"/>
        <end position="283"/>
    </location>
</feature>
<feature type="binding site" evidence="1">
    <location>
        <position position="42"/>
    </location>
    <ligand>
        <name>(6S)-NADPHX</name>
        <dbReference type="ChEBI" id="CHEBI:64076"/>
    </ligand>
</feature>
<feature type="binding site" evidence="1">
    <location>
        <position position="159"/>
    </location>
    <ligand>
        <name>(6S)-NADPHX</name>
        <dbReference type="ChEBI" id="CHEBI:64076"/>
    </ligand>
</feature>
<feature type="binding site" evidence="1">
    <location>
        <begin position="196"/>
        <end position="200"/>
    </location>
    <ligand>
        <name>AMP</name>
        <dbReference type="ChEBI" id="CHEBI:456215"/>
    </ligand>
</feature>
<feature type="binding site" evidence="1">
    <location>
        <position position="224"/>
    </location>
    <ligand>
        <name>AMP</name>
        <dbReference type="ChEBI" id="CHEBI:456215"/>
    </ligand>
</feature>
<feature type="binding site" evidence="1">
    <location>
        <position position="225"/>
    </location>
    <ligand>
        <name>(6S)-NADPHX</name>
        <dbReference type="ChEBI" id="CHEBI:64076"/>
    </ligand>
</feature>
<name>NNRD_NITMS</name>
<keyword id="KW-0067">ATP-binding</keyword>
<keyword id="KW-0456">Lyase</keyword>
<keyword id="KW-0520">NAD</keyword>
<keyword id="KW-0521">NADP</keyword>
<keyword id="KW-0547">Nucleotide-binding</keyword>
<keyword id="KW-1185">Reference proteome</keyword>
<sequence>MARKTLTTALVKKFIPSRKSKSRKGENGIVLVVGGSYIYHGAPILSSIAALRSGTDLVYTSVPKINVASTRSVSPNLIVIPLVDQKLTRGAVNKLLGALPRKLDSATIGMGLAIQEKNALLHLVKSLLDRDVRLSLDASALIPEVLPLLANKNVVVTPHAGEFKRLFGQVPSNSKNERIKLVEEKAKEFGITVLLKGSTDIISNGSTTYLYEKKIPAMTVGGTGDVLSGLVAGLLSKNRKPLESAAAAAFINGLAGKVVQKKLGLHMTSMDLLPEISTVMKPFDKIM</sequence>
<evidence type="ECO:0000255" key="1">
    <source>
        <dbReference type="HAMAP-Rule" id="MF_01965"/>
    </source>
</evidence>
<dbReference type="EC" id="4.2.1.136" evidence="1"/>
<dbReference type="EMBL" id="CP000866">
    <property type="protein sequence ID" value="ABX12587.1"/>
    <property type="molecule type" value="Genomic_DNA"/>
</dbReference>
<dbReference type="RefSeq" id="WP_012215074.1">
    <property type="nucleotide sequence ID" value="NC_010085.1"/>
</dbReference>
<dbReference type="SMR" id="A9A498"/>
<dbReference type="FunCoup" id="A9A498">
    <property type="interactions" value="40"/>
</dbReference>
<dbReference type="STRING" id="436308.Nmar_0691"/>
<dbReference type="EnsemblBacteria" id="ABX12587">
    <property type="protein sequence ID" value="ABX12587"/>
    <property type="gene ID" value="Nmar_0691"/>
</dbReference>
<dbReference type="GeneID" id="5774602"/>
<dbReference type="KEGG" id="nmr:Nmar_0691"/>
<dbReference type="eggNOG" id="arCOG00018">
    <property type="taxonomic scope" value="Archaea"/>
</dbReference>
<dbReference type="HOGENOM" id="CLU_024853_2_2_2"/>
<dbReference type="InParanoid" id="A9A498"/>
<dbReference type="OrthoDB" id="15148at2157"/>
<dbReference type="PhylomeDB" id="A9A498"/>
<dbReference type="Proteomes" id="UP000000792">
    <property type="component" value="Chromosome"/>
</dbReference>
<dbReference type="GO" id="GO:0052855">
    <property type="term" value="F:ADP-dependent NAD(P)H-hydrate dehydratase activity"/>
    <property type="evidence" value="ECO:0007669"/>
    <property type="project" value="UniProtKB-UniRule"/>
</dbReference>
<dbReference type="GO" id="GO:0005524">
    <property type="term" value="F:ATP binding"/>
    <property type="evidence" value="ECO:0007669"/>
    <property type="project" value="UniProtKB-KW"/>
</dbReference>
<dbReference type="GO" id="GO:0110051">
    <property type="term" value="P:metabolite repair"/>
    <property type="evidence" value="ECO:0000318"/>
    <property type="project" value="GO_Central"/>
</dbReference>
<dbReference type="GO" id="GO:0046496">
    <property type="term" value="P:nicotinamide nucleotide metabolic process"/>
    <property type="evidence" value="ECO:0007669"/>
    <property type="project" value="UniProtKB-UniRule"/>
</dbReference>
<dbReference type="CDD" id="cd01171">
    <property type="entry name" value="YXKO-related"/>
    <property type="match status" value="1"/>
</dbReference>
<dbReference type="FunFam" id="3.40.1190.20:FF:000161">
    <property type="entry name" value="ADP-dependent (S)-NAD(P)H-hydrate dehydratase"/>
    <property type="match status" value="1"/>
</dbReference>
<dbReference type="Gene3D" id="3.40.1190.20">
    <property type="match status" value="1"/>
</dbReference>
<dbReference type="HAMAP" id="MF_01965">
    <property type="entry name" value="NADHX_dehydratase"/>
    <property type="match status" value="1"/>
</dbReference>
<dbReference type="InterPro" id="IPR017953">
    <property type="entry name" value="Carbohydrate_kinase_pred_CS"/>
</dbReference>
<dbReference type="InterPro" id="IPR000631">
    <property type="entry name" value="CARKD"/>
</dbReference>
<dbReference type="InterPro" id="IPR029056">
    <property type="entry name" value="Ribokinase-like"/>
</dbReference>
<dbReference type="NCBIfam" id="TIGR00196">
    <property type="entry name" value="yjeF_cterm"/>
    <property type="match status" value="1"/>
</dbReference>
<dbReference type="PANTHER" id="PTHR12592:SF0">
    <property type="entry name" value="ATP-DEPENDENT (S)-NAD(P)H-HYDRATE DEHYDRATASE"/>
    <property type="match status" value="1"/>
</dbReference>
<dbReference type="PANTHER" id="PTHR12592">
    <property type="entry name" value="ATP-DEPENDENT (S)-NAD(P)H-HYDRATE DEHYDRATASE FAMILY MEMBER"/>
    <property type="match status" value="1"/>
</dbReference>
<dbReference type="Pfam" id="PF01256">
    <property type="entry name" value="Carb_kinase"/>
    <property type="match status" value="1"/>
</dbReference>
<dbReference type="SUPFAM" id="SSF53613">
    <property type="entry name" value="Ribokinase-like"/>
    <property type="match status" value="1"/>
</dbReference>
<dbReference type="PROSITE" id="PS01050">
    <property type="entry name" value="YJEF_C_2"/>
    <property type="match status" value="1"/>
</dbReference>
<dbReference type="PROSITE" id="PS51383">
    <property type="entry name" value="YJEF_C_3"/>
    <property type="match status" value="1"/>
</dbReference>
<accession>A9A498</accession>
<gene>
    <name evidence="1" type="primary">nnrD</name>
    <name type="ordered locus">Nmar_0691</name>
</gene>